<gene>
    <name evidence="7" type="primary">P4H8</name>
    <name evidence="9" type="ordered locus">At4g35810</name>
</gene>
<protein>
    <recommendedName>
        <fullName evidence="8">Probable prolyl 4-hydroxylase 8</fullName>
        <shortName evidence="7">AtP4H8</shortName>
        <ecNumber evidence="8">1.14.11.2</ecNumber>
    </recommendedName>
</protein>
<dbReference type="EC" id="1.14.11.2" evidence="8"/>
<dbReference type="EMBL" id="AL031986">
    <property type="protein sequence ID" value="CAA21467.1"/>
    <property type="status" value="ALT_SEQ"/>
    <property type="molecule type" value="Genomic_DNA"/>
</dbReference>
<dbReference type="EMBL" id="AL161588">
    <property type="protein sequence ID" value="CAB81490.1"/>
    <property type="status" value="ALT_SEQ"/>
    <property type="molecule type" value="Genomic_DNA"/>
</dbReference>
<dbReference type="EMBL" id="CP002687">
    <property type="protein sequence ID" value="AEE86574.1"/>
    <property type="molecule type" value="Genomic_DNA"/>
</dbReference>
<dbReference type="EMBL" id="CP002687">
    <property type="protein sequence ID" value="ANM66441.1"/>
    <property type="molecule type" value="Genomic_DNA"/>
</dbReference>
<dbReference type="PIR" id="T04691">
    <property type="entry name" value="T04691"/>
</dbReference>
<dbReference type="RefSeq" id="NP_001320148.1">
    <property type="nucleotide sequence ID" value="NM_001342375.1"/>
</dbReference>
<dbReference type="RefSeq" id="NP_195306.2">
    <property type="nucleotide sequence ID" value="NM_119747.3"/>
</dbReference>
<dbReference type="SMR" id="F4JNU8"/>
<dbReference type="FunCoup" id="F4JNU8">
    <property type="interactions" value="17"/>
</dbReference>
<dbReference type="STRING" id="3702.F4JNU8"/>
<dbReference type="GlyCosmos" id="F4JNU8">
    <property type="glycosylation" value="2 sites, No reported glycans"/>
</dbReference>
<dbReference type="GlyGen" id="F4JNU8">
    <property type="glycosylation" value="2 sites"/>
</dbReference>
<dbReference type="PaxDb" id="3702-AT4G35810.1"/>
<dbReference type="EnsemblPlants" id="AT4G35810.1">
    <property type="protein sequence ID" value="AT4G35810.1"/>
    <property type="gene ID" value="AT4G35810"/>
</dbReference>
<dbReference type="EnsemblPlants" id="AT4G35810.2">
    <property type="protein sequence ID" value="AT4G35810.2"/>
    <property type="gene ID" value="AT4G35810"/>
</dbReference>
<dbReference type="GeneID" id="829735"/>
<dbReference type="Gramene" id="AT4G35810.1">
    <property type="protein sequence ID" value="AT4G35810.1"/>
    <property type="gene ID" value="AT4G35810"/>
</dbReference>
<dbReference type="Gramene" id="AT4G35810.2">
    <property type="protein sequence ID" value="AT4G35810.2"/>
    <property type="gene ID" value="AT4G35810"/>
</dbReference>
<dbReference type="KEGG" id="ath:AT4G35810"/>
<dbReference type="Araport" id="AT4G35810"/>
<dbReference type="TAIR" id="AT4G35810"/>
<dbReference type="eggNOG" id="KOG1591">
    <property type="taxonomic scope" value="Eukaryota"/>
</dbReference>
<dbReference type="HOGENOM" id="CLU_058132_1_2_1"/>
<dbReference type="InParanoid" id="F4JNU8"/>
<dbReference type="OMA" id="DRWLEVI"/>
<dbReference type="OrthoDB" id="420380at2759"/>
<dbReference type="PRO" id="PR:F4JNU8"/>
<dbReference type="Proteomes" id="UP000006548">
    <property type="component" value="Chromosome 4"/>
</dbReference>
<dbReference type="ExpressionAtlas" id="F4JNU8">
    <property type="expression patterns" value="baseline and differential"/>
</dbReference>
<dbReference type="GO" id="GO:0005789">
    <property type="term" value="C:endoplasmic reticulum membrane"/>
    <property type="evidence" value="ECO:0007669"/>
    <property type="project" value="UniProtKB-SubCell"/>
</dbReference>
<dbReference type="GO" id="GO:0005506">
    <property type="term" value="F:iron ion binding"/>
    <property type="evidence" value="ECO:0007669"/>
    <property type="project" value="InterPro"/>
</dbReference>
<dbReference type="GO" id="GO:0031418">
    <property type="term" value="F:L-ascorbic acid binding"/>
    <property type="evidence" value="ECO:0007669"/>
    <property type="project" value="InterPro"/>
</dbReference>
<dbReference type="GO" id="GO:0004656">
    <property type="term" value="F:procollagen-proline 4-dioxygenase activity"/>
    <property type="evidence" value="ECO:0007669"/>
    <property type="project" value="UniProtKB-EC"/>
</dbReference>
<dbReference type="FunFam" id="2.60.120.620:FF:000002">
    <property type="entry name" value="Prolyl 4-hydroxylase 4"/>
    <property type="match status" value="1"/>
</dbReference>
<dbReference type="Gene3D" id="2.60.120.620">
    <property type="entry name" value="q2cbj1_9rhob like domain"/>
    <property type="match status" value="1"/>
</dbReference>
<dbReference type="InterPro" id="IPR005123">
    <property type="entry name" value="Oxoglu/Fe-dep_dioxygenase_dom"/>
</dbReference>
<dbReference type="InterPro" id="IPR045054">
    <property type="entry name" value="P4HA-like"/>
</dbReference>
<dbReference type="InterPro" id="IPR006620">
    <property type="entry name" value="Pro_4_hyd_alph"/>
</dbReference>
<dbReference type="InterPro" id="IPR044862">
    <property type="entry name" value="Pro_4_hyd_alph_FE2OG_OXY"/>
</dbReference>
<dbReference type="PANTHER" id="PTHR10869:SF160">
    <property type="entry name" value="PROLYL 4-HYDROXYLASE 11-RELATED"/>
    <property type="match status" value="1"/>
</dbReference>
<dbReference type="PANTHER" id="PTHR10869">
    <property type="entry name" value="PROLYL 4-HYDROXYLASE ALPHA SUBUNIT"/>
    <property type="match status" value="1"/>
</dbReference>
<dbReference type="Pfam" id="PF13640">
    <property type="entry name" value="2OG-FeII_Oxy_3"/>
    <property type="match status" value="1"/>
</dbReference>
<dbReference type="SMART" id="SM00702">
    <property type="entry name" value="P4Hc"/>
    <property type="match status" value="1"/>
</dbReference>
<dbReference type="PROSITE" id="PS51471">
    <property type="entry name" value="FE2OG_OXY"/>
    <property type="match status" value="1"/>
</dbReference>
<comment type="function">
    <text evidence="3">Catalyzes the post-translational formation of 4-hydroxyproline in -Xaa-Pro-Gly- sequences in proline-rich peptide sequences of plant glycoproteins and other proteins. Hydroxyprolines are important constituent of many plant cell wall glycoproteins such as extensins, hydroxyproline-rich glycoproteins, lectins and arabinogalactan proteins.</text>
</comment>
<comment type="catalytic activity">
    <reaction evidence="3">
        <text>L-prolyl-[collagen] + 2-oxoglutarate + O2 = trans-4-hydroxy-L-prolyl-[collagen] + succinate + CO2</text>
        <dbReference type="Rhea" id="RHEA:18945"/>
        <dbReference type="Rhea" id="RHEA-COMP:11676"/>
        <dbReference type="Rhea" id="RHEA-COMP:11680"/>
        <dbReference type="ChEBI" id="CHEBI:15379"/>
        <dbReference type="ChEBI" id="CHEBI:16526"/>
        <dbReference type="ChEBI" id="CHEBI:16810"/>
        <dbReference type="ChEBI" id="CHEBI:30031"/>
        <dbReference type="ChEBI" id="CHEBI:50342"/>
        <dbReference type="ChEBI" id="CHEBI:61965"/>
        <dbReference type="EC" id="1.14.11.2"/>
    </reaction>
</comment>
<comment type="cofactor">
    <cofactor evidence="6">
        <name>Fe(2+)</name>
        <dbReference type="ChEBI" id="CHEBI:29033"/>
    </cofactor>
    <text evidence="6">Binds 1 Fe(2+) ion per subunit.</text>
</comment>
<comment type="cofactor">
    <cofactor evidence="2">
        <name>L-ascorbate</name>
        <dbReference type="ChEBI" id="CHEBI:38290"/>
    </cofactor>
</comment>
<comment type="subcellular location">
    <subcellularLocation>
        <location evidence="1">Endoplasmic reticulum membrane</location>
        <topology evidence="1">Single-pass type II membrane protein</topology>
    </subcellularLocation>
</comment>
<comment type="similarity">
    <text evidence="8">Belongs to the P4HA family.</text>
</comment>
<comment type="sequence caution" evidence="8">
    <conflict type="erroneous gene model prediction">
        <sequence resource="EMBL-CDS" id="CAA21467"/>
    </conflict>
</comment>
<comment type="sequence caution" evidence="8">
    <conflict type="erroneous gene model prediction">
        <sequence resource="EMBL-CDS" id="CAB81490"/>
    </conflict>
</comment>
<organism>
    <name type="scientific">Arabidopsis thaliana</name>
    <name type="common">Mouse-ear cress</name>
    <dbReference type="NCBI Taxonomy" id="3702"/>
    <lineage>
        <taxon>Eukaryota</taxon>
        <taxon>Viridiplantae</taxon>
        <taxon>Streptophyta</taxon>
        <taxon>Embryophyta</taxon>
        <taxon>Tracheophyta</taxon>
        <taxon>Spermatophyta</taxon>
        <taxon>Magnoliopsida</taxon>
        <taxon>eudicotyledons</taxon>
        <taxon>Gunneridae</taxon>
        <taxon>Pentapetalae</taxon>
        <taxon>rosids</taxon>
        <taxon>malvids</taxon>
        <taxon>Brassicales</taxon>
        <taxon>Brassicaceae</taxon>
        <taxon>Camelineae</taxon>
        <taxon>Arabidopsis</taxon>
    </lineage>
</organism>
<name>P4H8_ARATH</name>
<keyword id="KW-0223">Dioxygenase</keyword>
<keyword id="KW-0256">Endoplasmic reticulum</keyword>
<keyword id="KW-0325">Glycoprotein</keyword>
<keyword id="KW-0408">Iron</keyword>
<keyword id="KW-0472">Membrane</keyword>
<keyword id="KW-0479">Metal-binding</keyword>
<keyword id="KW-0560">Oxidoreductase</keyword>
<keyword id="KW-1185">Reference proteome</keyword>
<keyword id="KW-0735">Signal-anchor</keyword>
<keyword id="KW-0812">Transmembrane</keyword>
<keyword id="KW-1133">Transmembrane helix</keyword>
<proteinExistence type="inferred from homology"/>
<evidence type="ECO:0000250" key="1">
    <source>
        <dbReference type="UniProtKB" id="Q24JN5"/>
    </source>
</evidence>
<evidence type="ECO:0000250" key="2">
    <source>
        <dbReference type="UniProtKB" id="Q86KR9"/>
    </source>
</evidence>
<evidence type="ECO:0000250" key="3">
    <source>
        <dbReference type="UniProtKB" id="Q9ZW86"/>
    </source>
</evidence>
<evidence type="ECO:0000255" key="4"/>
<evidence type="ECO:0000255" key="5">
    <source>
        <dbReference type="PROSITE-ProRule" id="PRU00498"/>
    </source>
</evidence>
<evidence type="ECO:0000255" key="6">
    <source>
        <dbReference type="PROSITE-ProRule" id="PRU00805"/>
    </source>
</evidence>
<evidence type="ECO:0000303" key="7">
    <source ref="3"/>
</evidence>
<evidence type="ECO:0000305" key="8"/>
<evidence type="ECO:0000312" key="9">
    <source>
        <dbReference type="Araport" id="AT4G35810"/>
    </source>
</evidence>
<feature type="chain" id="PRO_0000434541" description="Probable prolyl 4-hydroxylase 8">
    <location>
        <begin position="1"/>
        <end position="290"/>
    </location>
</feature>
<feature type="topological domain" description="Cytoplasmic" evidence="8">
    <location>
        <begin position="1"/>
        <end position="19"/>
    </location>
</feature>
<feature type="transmembrane region" description="Helical; Signal-anchor for type II membrane protein" evidence="4">
    <location>
        <begin position="20"/>
        <end position="40"/>
    </location>
</feature>
<feature type="topological domain" description="Lumenal" evidence="8">
    <location>
        <begin position="41"/>
        <end position="290"/>
    </location>
</feature>
<feature type="domain" description="Fe2OG dioxygenase" evidence="6">
    <location>
        <begin position="163"/>
        <end position="286"/>
    </location>
</feature>
<feature type="binding site" evidence="6">
    <location>
        <position position="181"/>
    </location>
    <ligand>
        <name>Fe cation</name>
        <dbReference type="ChEBI" id="CHEBI:24875"/>
    </ligand>
</feature>
<feature type="binding site" evidence="6">
    <location>
        <position position="183"/>
    </location>
    <ligand>
        <name>Fe cation</name>
        <dbReference type="ChEBI" id="CHEBI:24875"/>
    </ligand>
</feature>
<feature type="binding site" evidence="6">
    <location>
        <position position="267"/>
    </location>
    <ligand>
        <name>Fe cation</name>
        <dbReference type="ChEBI" id="CHEBI:24875"/>
    </ligand>
</feature>
<feature type="binding site" evidence="6">
    <location>
        <position position="277"/>
    </location>
    <ligand>
        <name>2-oxoglutarate</name>
        <dbReference type="ChEBI" id="CHEBI:16810"/>
    </ligand>
</feature>
<feature type="glycosylation site" description="N-linked (GlcNAc...) asparagine" evidence="5">
    <location>
        <position position="46"/>
    </location>
</feature>
<feature type="glycosylation site" description="N-linked (GlcNAc...) asparagine" evidence="5">
    <location>
        <position position="222"/>
    </location>
</feature>
<reference key="1">
    <citation type="journal article" date="1999" name="Nature">
        <title>Sequence and analysis of chromosome 4 of the plant Arabidopsis thaliana.</title>
        <authorList>
            <person name="Mayer K.F.X."/>
            <person name="Schueller C."/>
            <person name="Wambutt R."/>
            <person name="Murphy G."/>
            <person name="Volckaert G."/>
            <person name="Pohl T."/>
            <person name="Duesterhoeft A."/>
            <person name="Stiekema W."/>
            <person name="Entian K.-D."/>
            <person name="Terryn N."/>
            <person name="Harris B."/>
            <person name="Ansorge W."/>
            <person name="Brandt P."/>
            <person name="Grivell L.A."/>
            <person name="Rieger M."/>
            <person name="Weichselgartner M."/>
            <person name="de Simone V."/>
            <person name="Obermaier B."/>
            <person name="Mache R."/>
            <person name="Mueller M."/>
            <person name="Kreis M."/>
            <person name="Delseny M."/>
            <person name="Puigdomenech P."/>
            <person name="Watson M."/>
            <person name="Schmidtheini T."/>
            <person name="Reichert B."/>
            <person name="Portetelle D."/>
            <person name="Perez-Alonso M."/>
            <person name="Boutry M."/>
            <person name="Bancroft I."/>
            <person name="Vos P."/>
            <person name="Hoheisel J."/>
            <person name="Zimmermann W."/>
            <person name="Wedler H."/>
            <person name="Ridley P."/>
            <person name="Langham S.-A."/>
            <person name="McCullagh B."/>
            <person name="Bilham L."/>
            <person name="Robben J."/>
            <person name="van der Schueren J."/>
            <person name="Grymonprez B."/>
            <person name="Chuang Y.-J."/>
            <person name="Vandenbussche F."/>
            <person name="Braeken M."/>
            <person name="Weltjens I."/>
            <person name="Voet M."/>
            <person name="Bastiaens I."/>
            <person name="Aert R."/>
            <person name="Defoor E."/>
            <person name="Weitzenegger T."/>
            <person name="Bothe G."/>
            <person name="Ramsperger U."/>
            <person name="Hilbert H."/>
            <person name="Braun M."/>
            <person name="Holzer E."/>
            <person name="Brandt A."/>
            <person name="Peters S."/>
            <person name="van Staveren M."/>
            <person name="Dirkse W."/>
            <person name="Mooijman P."/>
            <person name="Klein Lankhorst R."/>
            <person name="Rose M."/>
            <person name="Hauf J."/>
            <person name="Koetter P."/>
            <person name="Berneiser S."/>
            <person name="Hempel S."/>
            <person name="Feldpausch M."/>
            <person name="Lamberth S."/>
            <person name="Van den Daele H."/>
            <person name="De Keyser A."/>
            <person name="Buysshaert C."/>
            <person name="Gielen J."/>
            <person name="Villarroel R."/>
            <person name="De Clercq R."/>
            <person name="van Montagu M."/>
            <person name="Rogers J."/>
            <person name="Cronin A."/>
            <person name="Quail M.A."/>
            <person name="Bray-Allen S."/>
            <person name="Clark L."/>
            <person name="Doggett J."/>
            <person name="Hall S."/>
            <person name="Kay M."/>
            <person name="Lennard N."/>
            <person name="McLay K."/>
            <person name="Mayes R."/>
            <person name="Pettett A."/>
            <person name="Rajandream M.A."/>
            <person name="Lyne M."/>
            <person name="Benes V."/>
            <person name="Rechmann S."/>
            <person name="Borkova D."/>
            <person name="Bloecker H."/>
            <person name="Scharfe M."/>
            <person name="Grimm M."/>
            <person name="Loehnert T.-H."/>
            <person name="Dose S."/>
            <person name="de Haan M."/>
            <person name="Maarse A.C."/>
            <person name="Schaefer M."/>
            <person name="Mueller-Auer S."/>
            <person name="Gabel C."/>
            <person name="Fuchs M."/>
            <person name="Fartmann B."/>
            <person name="Granderath K."/>
            <person name="Dauner D."/>
            <person name="Herzl A."/>
            <person name="Neumann S."/>
            <person name="Argiriou A."/>
            <person name="Vitale D."/>
            <person name="Liguori R."/>
            <person name="Piravandi E."/>
            <person name="Massenet O."/>
            <person name="Quigley F."/>
            <person name="Clabauld G."/>
            <person name="Muendlein A."/>
            <person name="Felber R."/>
            <person name="Schnabl S."/>
            <person name="Hiller R."/>
            <person name="Schmidt W."/>
            <person name="Lecharny A."/>
            <person name="Aubourg S."/>
            <person name="Chefdor F."/>
            <person name="Cooke R."/>
            <person name="Berger C."/>
            <person name="Monfort A."/>
            <person name="Casacuberta E."/>
            <person name="Gibbons T."/>
            <person name="Weber N."/>
            <person name="Vandenbol M."/>
            <person name="Bargues M."/>
            <person name="Terol J."/>
            <person name="Torres A."/>
            <person name="Perez-Perez A."/>
            <person name="Purnelle B."/>
            <person name="Bent E."/>
            <person name="Johnson S."/>
            <person name="Tacon D."/>
            <person name="Jesse T."/>
            <person name="Heijnen L."/>
            <person name="Schwarz S."/>
            <person name="Scholler P."/>
            <person name="Heber S."/>
            <person name="Francs P."/>
            <person name="Bielke C."/>
            <person name="Frishman D."/>
            <person name="Haase D."/>
            <person name="Lemcke K."/>
            <person name="Mewes H.-W."/>
            <person name="Stocker S."/>
            <person name="Zaccaria P."/>
            <person name="Bevan M."/>
            <person name="Wilson R.K."/>
            <person name="de la Bastide M."/>
            <person name="Habermann K."/>
            <person name="Parnell L."/>
            <person name="Dedhia N."/>
            <person name="Gnoj L."/>
            <person name="Schutz K."/>
            <person name="Huang E."/>
            <person name="Spiegel L."/>
            <person name="Sekhon M."/>
            <person name="Murray J."/>
            <person name="Sheet P."/>
            <person name="Cordes M."/>
            <person name="Abu-Threideh J."/>
            <person name="Stoneking T."/>
            <person name="Kalicki J."/>
            <person name="Graves T."/>
            <person name="Harmon G."/>
            <person name="Edwards J."/>
            <person name="Latreille P."/>
            <person name="Courtney L."/>
            <person name="Cloud J."/>
            <person name="Abbott A."/>
            <person name="Scott K."/>
            <person name="Johnson D."/>
            <person name="Minx P."/>
            <person name="Bentley D."/>
            <person name="Fulton B."/>
            <person name="Miller N."/>
            <person name="Greco T."/>
            <person name="Kemp K."/>
            <person name="Kramer J."/>
            <person name="Fulton L."/>
            <person name="Mardis E."/>
            <person name="Dante M."/>
            <person name="Pepin K."/>
            <person name="Hillier L.W."/>
            <person name="Nelson J."/>
            <person name="Spieth J."/>
            <person name="Ryan E."/>
            <person name="Andrews S."/>
            <person name="Geisel C."/>
            <person name="Layman D."/>
            <person name="Du H."/>
            <person name="Ali J."/>
            <person name="Berghoff A."/>
            <person name="Jones K."/>
            <person name="Drone K."/>
            <person name="Cotton M."/>
            <person name="Joshu C."/>
            <person name="Antonoiu B."/>
            <person name="Zidanic M."/>
            <person name="Strong C."/>
            <person name="Sun H."/>
            <person name="Lamar B."/>
            <person name="Yordan C."/>
            <person name="Ma P."/>
            <person name="Zhong J."/>
            <person name="Preston R."/>
            <person name="Vil D."/>
            <person name="Shekher M."/>
            <person name="Matero A."/>
            <person name="Shah R."/>
            <person name="Swaby I.K."/>
            <person name="O'Shaughnessy A."/>
            <person name="Rodriguez M."/>
            <person name="Hoffman J."/>
            <person name="Till S."/>
            <person name="Granat S."/>
            <person name="Shohdy N."/>
            <person name="Hasegawa A."/>
            <person name="Hameed A."/>
            <person name="Lodhi M."/>
            <person name="Johnson A."/>
            <person name="Chen E."/>
            <person name="Marra M.A."/>
            <person name="Martienssen R."/>
            <person name="McCombie W.R."/>
        </authorList>
    </citation>
    <scope>NUCLEOTIDE SEQUENCE [LARGE SCALE GENOMIC DNA]</scope>
    <source>
        <strain>cv. Columbia</strain>
    </source>
</reference>
<reference key="2">
    <citation type="journal article" date="2017" name="Plant J.">
        <title>Araport11: a complete reannotation of the Arabidopsis thaliana reference genome.</title>
        <authorList>
            <person name="Cheng C.Y."/>
            <person name="Krishnakumar V."/>
            <person name="Chan A.P."/>
            <person name="Thibaud-Nissen F."/>
            <person name="Schobel S."/>
            <person name="Town C.D."/>
        </authorList>
    </citation>
    <scope>GENOME REANNOTATION</scope>
    <source>
        <strain>cv. Columbia</strain>
    </source>
</reference>
<reference key="3">
    <citation type="journal article" date="2007" name="Physiol. Plantarum">
        <title>Arabidopsis prolyl 4-hydroxylases are differentially expressed in response to hypoxia, anoxia and mechanical wounding.</title>
        <authorList>
            <person name="Vlad F."/>
            <person name="Spano T."/>
            <person name="Vlad D."/>
            <person name="Bou Daher F."/>
            <person name="Ouelhadj A."/>
            <person name="Kalaitzis P."/>
        </authorList>
    </citation>
    <scope>GENE FAMILY</scope>
    <scope>NOMENCLATURE</scope>
</reference>
<sequence>MAKKPKQLRNKPRKSFSTQTFTVVVLVLFVILILVGLGIFSLPSTNKTSSMPMDLTTIVQTIQERESFGDEEDGNGDRWLEVISWEPRAFVYHNFLTNEECEHLISLAKPSMMKSKVVDVKTGKSIDSRVRTSSGTFLNRGHDEIVEEIENRISDFTFIPPENGEGLQVLHYEVGQRYEPHHDYFFDEFNVRKGGQRIATVLMYLSDVDEGGETVFPAAKGNVSDVPWWDELSQCGKEGLSVLPKKRDALLFWSMKPDASLDPSSLHGGCPVIKGNKWSSTKWFHVHEYN</sequence>
<accession>F4JNU8</accession>
<accession>Q9SZS9</accession>